<keyword id="KW-0050">Antiport</keyword>
<keyword id="KW-0997">Cell inner membrane</keyword>
<keyword id="KW-1003">Cell membrane</keyword>
<keyword id="KW-0406">Ion transport</keyword>
<keyword id="KW-0472">Membrane</keyword>
<keyword id="KW-1185">Reference proteome</keyword>
<keyword id="KW-0915">Sodium</keyword>
<keyword id="KW-0739">Sodium transport</keyword>
<keyword id="KW-0812">Transmembrane</keyword>
<keyword id="KW-1133">Transmembrane helix</keyword>
<keyword id="KW-0813">Transport</keyword>
<reference key="1">
    <citation type="journal article" date="2010" name="PLoS ONE">
        <title>Genome sequence of Cronobacter sakazakii BAA-894 and comparative genomic hybridization analysis with other Cronobacter species.</title>
        <authorList>
            <person name="Kucerova E."/>
            <person name="Clifton S.W."/>
            <person name="Xia X.Q."/>
            <person name="Long F."/>
            <person name="Porwollik S."/>
            <person name="Fulton L."/>
            <person name="Fronick C."/>
            <person name="Minx P."/>
            <person name="Kyung K."/>
            <person name="Warren W."/>
            <person name="Fulton R."/>
            <person name="Feng D."/>
            <person name="Wollam A."/>
            <person name="Shah N."/>
            <person name="Bhonagiri V."/>
            <person name="Nash W.E."/>
            <person name="Hallsworth-Pepin K."/>
            <person name="Wilson R.K."/>
            <person name="McClelland M."/>
            <person name="Forsythe S.J."/>
        </authorList>
    </citation>
    <scope>NUCLEOTIDE SEQUENCE [LARGE SCALE GENOMIC DNA]</scope>
    <source>
        <strain>ATCC BAA-894</strain>
    </source>
</reference>
<comment type="function">
    <text evidence="1">Na(+)/H(+) antiporter that extrudes sodium in exchange for external protons.</text>
</comment>
<comment type="catalytic activity">
    <reaction evidence="1">
        <text>2 Na(+)(in) + 3 H(+)(out) = 2 Na(+)(out) + 3 H(+)(in)</text>
        <dbReference type="Rhea" id="RHEA:29247"/>
        <dbReference type="ChEBI" id="CHEBI:15378"/>
        <dbReference type="ChEBI" id="CHEBI:29101"/>
    </reaction>
    <physiologicalReaction direction="left-to-right" evidence="1">
        <dbReference type="Rhea" id="RHEA:29248"/>
    </physiologicalReaction>
</comment>
<comment type="subcellular location">
    <subcellularLocation>
        <location evidence="1">Cell inner membrane</location>
        <topology evidence="1">Multi-pass membrane protein</topology>
    </subcellularLocation>
</comment>
<comment type="similarity">
    <text evidence="1">Belongs to the NhaB Na(+)/H(+) (TC 2.A.34) antiporter family.</text>
</comment>
<feature type="chain" id="PRO_0000333086" description="Na(+)/H(+) antiporter NhaB">
    <location>
        <begin position="1"/>
        <end position="520"/>
    </location>
</feature>
<feature type="transmembrane region" description="Helical" evidence="1">
    <location>
        <begin position="27"/>
        <end position="49"/>
    </location>
</feature>
<feature type="transmembrane region" description="Helical" evidence="1">
    <location>
        <begin position="62"/>
        <end position="82"/>
    </location>
</feature>
<feature type="transmembrane region" description="Helical" evidence="1">
    <location>
        <begin position="97"/>
        <end position="117"/>
    </location>
</feature>
<feature type="transmembrane region" description="Helical" evidence="1">
    <location>
        <begin position="120"/>
        <end position="140"/>
    </location>
</feature>
<feature type="transmembrane region" description="Helical" evidence="1">
    <location>
        <begin position="144"/>
        <end position="164"/>
    </location>
</feature>
<feature type="transmembrane region" description="Helical" evidence="1">
    <location>
        <begin position="202"/>
        <end position="222"/>
    </location>
</feature>
<feature type="transmembrane region" description="Helical" evidence="1">
    <location>
        <begin position="238"/>
        <end position="258"/>
    </location>
</feature>
<feature type="transmembrane region" description="Helical" evidence="1">
    <location>
        <begin position="303"/>
        <end position="323"/>
    </location>
</feature>
<feature type="transmembrane region" description="Helical" evidence="1">
    <location>
        <begin position="348"/>
        <end position="368"/>
    </location>
</feature>
<feature type="transmembrane region" description="Helical" evidence="1">
    <location>
        <begin position="391"/>
        <end position="411"/>
    </location>
</feature>
<feature type="transmembrane region" description="Helical" evidence="1">
    <location>
        <begin position="447"/>
        <end position="467"/>
    </location>
</feature>
<feature type="transmembrane region" description="Helical" evidence="1">
    <location>
        <begin position="475"/>
        <end position="495"/>
    </location>
</feature>
<protein>
    <recommendedName>
        <fullName evidence="1">Na(+)/H(+) antiporter NhaB</fullName>
    </recommendedName>
    <alternativeName>
        <fullName evidence="1">Sodium/proton antiporter NhaB</fullName>
    </alternativeName>
</protein>
<gene>
    <name evidence="1" type="primary">nhaB</name>
    <name type="ordered locus">ESA_01465</name>
</gene>
<dbReference type="EMBL" id="CP000783">
    <property type="protein sequence ID" value="ABU76723.1"/>
    <property type="molecule type" value="Genomic_DNA"/>
</dbReference>
<dbReference type="RefSeq" id="WP_012124510.1">
    <property type="nucleotide sequence ID" value="NC_009778.1"/>
</dbReference>
<dbReference type="SMR" id="A7MNK6"/>
<dbReference type="KEGG" id="esa:ESA_01465"/>
<dbReference type="PATRIC" id="fig|290339.8.peg.1299"/>
<dbReference type="HOGENOM" id="CLU_041110_0_0_6"/>
<dbReference type="Proteomes" id="UP000000260">
    <property type="component" value="Chromosome"/>
</dbReference>
<dbReference type="GO" id="GO:0005886">
    <property type="term" value="C:plasma membrane"/>
    <property type="evidence" value="ECO:0007669"/>
    <property type="project" value="UniProtKB-SubCell"/>
</dbReference>
<dbReference type="GO" id="GO:0015385">
    <property type="term" value="F:sodium:proton antiporter activity"/>
    <property type="evidence" value="ECO:0007669"/>
    <property type="project" value="InterPro"/>
</dbReference>
<dbReference type="HAMAP" id="MF_01599">
    <property type="entry name" value="NhaB"/>
    <property type="match status" value="1"/>
</dbReference>
<dbReference type="InterPro" id="IPR004671">
    <property type="entry name" value="Na+/H+_antiporter_NhaB"/>
</dbReference>
<dbReference type="NCBIfam" id="TIGR00774">
    <property type="entry name" value="NhaB"/>
    <property type="match status" value="1"/>
</dbReference>
<dbReference type="NCBIfam" id="NF007093">
    <property type="entry name" value="PRK09547.1"/>
    <property type="match status" value="1"/>
</dbReference>
<dbReference type="PANTHER" id="PTHR43302:SF1">
    <property type="entry name" value="NA(+)_H(+) ANTIPORTER NHAB"/>
    <property type="match status" value="1"/>
</dbReference>
<dbReference type="PANTHER" id="PTHR43302">
    <property type="entry name" value="TRANSPORTER ARSB-RELATED"/>
    <property type="match status" value="1"/>
</dbReference>
<dbReference type="Pfam" id="PF06450">
    <property type="entry name" value="NhaB"/>
    <property type="match status" value="1"/>
</dbReference>
<evidence type="ECO:0000255" key="1">
    <source>
        <dbReference type="HAMAP-Rule" id="MF_01599"/>
    </source>
</evidence>
<sequence>MEISYGRALYRNFLGQSPDWYKLCLLGFLILNPLVFWVSPFTAGWLLVIEFIFTLAMALKCYPLLPGGLLAVEALFIGMTSAEHVREEVANNLAVVLLLIFMVAGIYFMKQLLLLIFTRLLLGIRSKTLLSLAFCFAAAFLSAFLDALTVVAVVISVAVGFYGIYHRVASNRDEGQELVDDAQLDDERRATLERFRAFLRSLMMHAGVGTALGGVMTMVGEPQNLIIAHAAGWSFGDFLLRVAPVSVPVFICGIVTCILVEKTKSFGYGEPLPEPVRKILREYDDKSRQKRTRQDTMKLIIQGLIGVWLITALALHLAEVGLIGLSVIILASSLCGVTDEHAIGKAFTEALPFTALLTVFFAVVAVIIDQHLFAPIIAYVLEASPHNQLSLFYLFNGLLSSISDNVFVGTVYINEAKSALQQGVIDAKQFEMLAVAINTGTNLPSVATPNGQAAFLFLLTSALAPLIRLSYGRMVWMALPYTIVLTLVGLACVQFTLVPFTDWLLQSGWVSTPATTALLH</sequence>
<organism>
    <name type="scientific">Cronobacter sakazakii (strain ATCC BAA-894)</name>
    <name type="common">Enterobacter sakazakii</name>
    <dbReference type="NCBI Taxonomy" id="290339"/>
    <lineage>
        <taxon>Bacteria</taxon>
        <taxon>Pseudomonadati</taxon>
        <taxon>Pseudomonadota</taxon>
        <taxon>Gammaproteobacteria</taxon>
        <taxon>Enterobacterales</taxon>
        <taxon>Enterobacteriaceae</taxon>
        <taxon>Cronobacter</taxon>
    </lineage>
</organism>
<name>NHAB_CROS8</name>
<proteinExistence type="inferred from homology"/>
<accession>A7MNK6</accession>